<comment type="similarity">
    <text evidence="3">Belongs to the CWC26 family.</text>
</comment>
<protein>
    <recommendedName>
        <fullName>BUD13 homolog</fullName>
    </recommendedName>
    <alternativeName>
        <fullName evidence="4">BUD morphology abnormal gene homolog</fullName>
    </alternativeName>
</protein>
<evidence type="ECO:0000255" key="1"/>
<evidence type="ECO:0000256" key="2">
    <source>
        <dbReference type="SAM" id="MobiDB-lite"/>
    </source>
</evidence>
<evidence type="ECO:0000305" key="3"/>
<evidence type="ECO:0000312" key="4">
    <source>
        <dbReference type="WormBase" id="R08D7.1"/>
    </source>
</evidence>
<organism>
    <name type="scientific">Caenorhabditis elegans</name>
    <dbReference type="NCBI Taxonomy" id="6239"/>
    <lineage>
        <taxon>Eukaryota</taxon>
        <taxon>Metazoa</taxon>
        <taxon>Ecdysozoa</taxon>
        <taxon>Nematoda</taxon>
        <taxon>Chromadorea</taxon>
        <taxon>Rhabditida</taxon>
        <taxon>Rhabditina</taxon>
        <taxon>Rhabditomorpha</taxon>
        <taxon>Rhabditoidea</taxon>
        <taxon>Rhabditidae</taxon>
        <taxon>Peloderinae</taxon>
        <taxon>Caenorhabditis</taxon>
    </lineage>
</organism>
<gene>
    <name evidence="4" type="primary">bud-13</name>
    <name type="ORF">R08D7.1</name>
</gene>
<keyword id="KW-0175">Coiled coil</keyword>
<keyword id="KW-1185">Reference proteome</keyword>
<dbReference type="EMBL" id="Z12017">
    <property type="protein sequence ID" value="CAA78047.1"/>
    <property type="molecule type" value="Genomic_DNA"/>
</dbReference>
<dbReference type="PIR" id="S24457">
    <property type="entry name" value="S24457"/>
</dbReference>
<dbReference type="RefSeq" id="NP_498982.1">
    <property type="nucleotide sequence ID" value="NM_066581.6"/>
</dbReference>
<dbReference type="BioGRID" id="41465">
    <property type="interactions" value="1"/>
</dbReference>
<dbReference type="FunCoup" id="P30640">
    <property type="interactions" value="62"/>
</dbReference>
<dbReference type="IntAct" id="P30640">
    <property type="interactions" value="1"/>
</dbReference>
<dbReference type="STRING" id="6239.R08D7.1.1"/>
<dbReference type="iPTMnet" id="P30640"/>
<dbReference type="PaxDb" id="6239-R08D7.1"/>
<dbReference type="PeptideAtlas" id="P30640"/>
<dbReference type="EnsemblMetazoa" id="R08D7.1.1">
    <property type="protein sequence ID" value="R08D7.1.1"/>
    <property type="gene ID" value="WBGene00011142"/>
</dbReference>
<dbReference type="GeneID" id="176266"/>
<dbReference type="KEGG" id="cel:CELE_R08D7.1"/>
<dbReference type="UCSC" id="R08D7.1">
    <property type="organism name" value="c. elegans"/>
</dbReference>
<dbReference type="AGR" id="WB:WBGene00011142"/>
<dbReference type="CTD" id="176266"/>
<dbReference type="WormBase" id="R08D7.1">
    <property type="protein sequence ID" value="CE00289"/>
    <property type="gene ID" value="WBGene00011142"/>
    <property type="gene designation" value="bud-13"/>
</dbReference>
<dbReference type="eggNOG" id="KOG2654">
    <property type="taxonomic scope" value="Eukaryota"/>
</dbReference>
<dbReference type="GeneTree" id="ENSGT00390000014500"/>
<dbReference type="HOGENOM" id="CLU_024195_3_0_1"/>
<dbReference type="InParanoid" id="P30640"/>
<dbReference type="OMA" id="FEAEFQF"/>
<dbReference type="OrthoDB" id="6022at2759"/>
<dbReference type="PhylomeDB" id="P30640"/>
<dbReference type="PRO" id="PR:P30640"/>
<dbReference type="Proteomes" id="UP000001940">
    <property type="component" value="Chromosome III"/>
</dbReference>
<dbReference type="Bgee" id="WBGene00011142">
    <property type="expression patterns" value="Expressed in adult organism and 4 other cell types or tissues"/>
</dbReference>
<dbReference type="GO" id="GO:0005684">
    <property type="term" value="C:U2-type spliceosomal complex"/>
    <property type="evidence" value="ECO:0000318"/>
    <property type="project" value="GO_Central"/>
</dbReference>
<dbReference type="GO" id="GO:0000398">
    <property type="term" value="P:mRNA splicing, via spliceosome"/>
    <property type="evidence" value="ECO:0000318"/>
    <property type="project" value="GO_Central"/>
</dbReference>
<dbReference type="InterPro" id="IPR018609">
    <property type="entry name" value="Bud13"/>
</dbReference>
<dbReference type="InterPro" id="IPR051112">
    <property type="entry name" value="CWC26_splicing_factor"/>
</dbReference>
<dbReference type="PANTHER" id="PTHR31809">
    <property type="entry name" value="BUD13 HOMOLOG"/>
    <property type="match status" value="1"/>
</dbReference>
<dbReference type="PANTHER" id="PTHR31809:SF0">
    <property type="entry name" value="BUD13 HOMOLOG"/>
    <property type="match status" value="1"/>
</dbReference>
<dbReference type="Pfam" id="PF09736">
    <property type="entry name" value="Bud13"/>
    <property type="match status" value="1"/>
</dbReference>
<sequence length="458" mass="52769">MTSKADYLKKYLSPASGDIEKKKKKKNKDKNKPSGLRLIEEDAFLSVDAAKTRDIGSDEEREEIEVLKQSVKKAKVVHGFKQTFAEVDAPKVIKPEPLSPDNSPPRGKRQRHDSDNSPPRPSRKRNDSDNSPPRPSRNRHDSDKDNSPPRRRRHDSDNSPPRPSRKIREESPSARNRRSPPRTRRDRHDSDNSPPRNRSRRDSDNSPPRRRPSSPARRRKDDDLSPPRKSRKIEEPKKIKKEEPDSDTETSGRTLEGKRSGLQSARDLKEESDKLRAKNSKMFEEMDTSVSGRFADTVYRQKQTKKKGKDSEEDQAKKERETKKTEELKEKYKSWNKGVAQIEDRRAQLEEMARVAAEPMARARDDDAMNAHLKEVLHAADPMANMIQKKRRDTAIDRGELVYPSYHGHFVPNRFGIAPGYRWDGVDRSNGFEGKLAKTENTKTANQSEYYKSIAEYE</sequence>
<feature type="chain" id="PRO_0000065429" description="BUD13 homolog">
    <location>
        <begin position="1"/>
        <end position="458"/>
    </location>
</feature>
<feature type="region of interest" description="Disordered" evidence="2">
    <location>
        <begin position="16"/>
        <end position="37"/>
    </location>
</feature>
<feature type="region of interest" description="Disordered" evidence="2">
    <location>
        <begin position="81"/>
        <end position="328"/>
    </location>
</feature>
<feature type="region of interest" description="Disordered" evidence="2">
    <location>
        <begin position="437"/>
        <end position="458"/>
    </location>
</feature>
<feature type="coiled-coil region" evidence="1">
    <location>
        <begin position="262"/>
        <end position="356"/>
    </location>
</feature>
<feature type="compositionally biased region" description="Basic and acidic residues" evidence="2">
    <location>
        <begin position="138"/>
        <end position="148"/>
    </location>
</feature>
<feature type="compositionally biased region" description="Basic residues" evidence="2">
    <location>
        <begin position="175"/>
        <end position="185"/>
    </location>
</feature>
<feature type="compositionally biased region" description="Basic residues" evidence="2">
    <location>
        <begin position="208"/>
        <end position="218"/>
    </location>
</feature>
<feature type="compositionally biased region" description="Basic and acidic residues" evidence="2">
    <location>
        <begin position="219"/>
        <end position="243"/>
    </location>
</feature>
<feature type="compositionally biased region" description="Basic and acidic residues" evidence="2">
    <location>
        <begin position="266"/>
        <end position="284"/>
    </location>
</feature>
<feature type="compositionally biased region" description="Basic and acidic residues" evidence="2">
    <location>
        <begin position="314"/>
        <end position="328"/>
    </location>
</feature>
<proteinExistence type="inferred from homology"/>
<name>BUD13_CAEEL</name>
<accession>P30640</accession>
<reference key="1">
    <citation type="journal article" date="1994" name="Nature">
        <title>2.2 Mb of contiguous nucleotide sequence from chromosome III of C. elegans.</title>
        <authorList>
            <person name="Wilson R."/>
            <person name="Ainscough R."/>
            <person name="Anderson K."/>
            <person name="Baynes C."/>
            <person name="Berks M."/>
            <person name="Bonfield J."/>
            <person name="Burton J."/>
            <person name="Connell M."/>
            <person name="Copsey T."/>
            <person name="Cooper J."/>
            <person name="Coulson A."/>
            <person name="Craxton M."/>
            <person name="Dear S."/>
            <person name="Du Z."/>
            <person name="Durbin R."/>
            <person name="Favello A."/>
            <person name="Fraser A."/>
            <person name="Fulton L."/>
            <person name="Gardner A."/>
            <person name="Green P."/>
            <person name="Hawkins T."/>
            <person name="Hillier L."/>
            <person name="Jier M."/>
            <person name="Johnston L."/>
            <person name="Jones M."/>
            <person name="Kershaw J."/>
            <person name="Kirsten J."/>
            <person name="Laisster N."/>
            <person name="Latreille P."/>
            <person name="Lightning J."/>
            <person name="Lloyd C."/>
            <person name="Mortimore B."/>
            <person name="O'Callaghan M."/>
            <person name="Parsons J."/>
            <person name="Percy C."/>
            <person name="Rifken L."/>
            <person name="Roopra A."/>
            <person name="Saunders D."/>
            <person name="Shownkeen R."/>
            <person name="Sims M."/>
            <person name="Smaldon N."/>
            <person name="Smith A."/>
            <person name="Smith M."/>
            <person name="Sonnhammer E."/>
            <person name="Staden R."/>
            <person name="Sulston J."/>
            <person name="Thierry-Mieg J."/>
            <person name="Thomas K."/>
            <person name="Vaudin M."/>
            <person name="Vaughan K."/>
            <person name="Waterston R."/>
            <person name="Watson A."/>
            <person name="Weinstock L."/>
            <person name="Wilkinson-Sproat J."/>
            <person name="Wohldman P."/>
        </authorList>
    </citation>
    <scope>NUCLEOTIDE SEQUENCE [LARGE SCALE GENOMIC DNA]</scope>
    <source>
        <strain>Bristol N2</strain>
    </source>
</reference>
<reference key="2">
    <citation type="journal article" date="1998" name="Science">
        <title>Genome sequence of the nematode C. elegans: a platform for investigating biology.</title>
        <authorList>
            <consortium name="The C. elegans sequencing consortium"/>
        </authorList>
    </citation>
    <scope>NUCLEOTIDE SEQUENCE [LARGE SCALE GENOMIC DNA]</scope>
    <source>
        <strain>Bristol N2</strain>
    </source>
</reference>